<protein>
    <recommendedName>
        <fullName>Fiber protein</fullName>
        <shortName>SPIKE</shortName>
    </recommendedName>
    <alternativeName>
        <fullName>Protein IV</fullName>
    </alternativeName>
</protein>
<organism>
    <name type="scientific">Human adenovirus E serotype 4</name>
    <name type="common">HAdV-4</name>
    <name type="synonym">Human adenovirus 4</name>
    <dbReference type="NCBI Taxonomy" id="28280"/>
    <lineage>
        <taxon>Viruses</taxon>
        <taxon>Varidnaviria</taxon>
        <taxon>Bamfordvirae</taxon>
        <taxon>Preplasmiviricota</taxon>
        <taxon>Tectiliviricetes</taxon>
        <taxon>Rowavirales</taxon>
        <taxon>Adenoviridae</taxon>
        <taxon>Mastadenovirus</taxon>
        <taxon>Human mastadenovirus E</taxon>
    </lineage>
</organism>
<reference key="1">
    <citation type="submission" date="1993-11" db="EMBL/GenBank/DDBJ databases">
        <authorList>
            <person name="Pring-Akerblom P."/>
            <person name="Adrian T."/>
        </authorList>
    </citation>
    <scope>NUCLEOTIDE SEQUENCE [GENOMIC DNA]</scope>
    <source>
        <strain>Isolate RJ-67</strain>
    </source>
</reference>
<reference key="2">
    <citation type="journal article" date="2005" name="J. Virol.">
        <title>Adenovirus receptors.</title>
        <authorList>
            <person name="Zhang Y."/>
            <person name="Bergelson J.M."/>
        </authorList>
    </citation>
    <scope>REVIEW</scope>
</reference>
<comment type="function">
    <text evidence="1">Forms spikes that protrude from each vertex of the icosahedral capsid. Interacts with host receptor CXCAR to provide virion initial attachment to target cell. Fiber proteins are shed during virus entry, when virus is still at the cell surface (By similarity).</text>
</comment>
<comment type="subunit">
    <text evidence="1">Homotrimer. Interacts with host receptor CXCAR. Interacts (via N-terminal tail region) with pentons (By similarity).</text>
</comment>
<comment type="subcellular location">
    <subcellularLocation>
        <location evidence="1">Virion</location>
    </subcellularLocation>
    <subcellularLocation>
        <location evidence="1">Host nucleus</location>
    </subcellularLocation>
    <text evidence="1">Anchored to the pentons, protrudes from the virion surface.</text>
</comment>
<comment type="induction">
    <text>Expressed in the late phase of the viral replicative cycle.</text>
</comment>
<comment type="domain">
    <text evidence="1">The tail region anchors the fiber to penton base capsomers, whereas the shaft, built from several repeated motifs, allows the knob to protrude from the virion.</text>
</comment>
<comment type="miscellaneous">
    <text evidence="1">All late proteins expressed from the major late promoter are produced by alternative splicing and alternative polyadenylation of the same gene giving rise to non-overlapping ORFs. A leader sequence is present in the N-terminus of all these mRNAs and is recognized by the viral shutoff protein to provide expression although conventional translation via ribosome scanning from the cap has been shut off in the host cell (By similarity).</text>
</comment>
<comment type="similarity">
    <text evidence="2">Belongs to the adenoviridae fiber family.</text>
</comment>
<proteinExistence type="evidence at transcript level"/>
<name>SPIKE_ADE04</name>
<feature type="chain" id="PRO_0000221788" description="Fiber protein">
    <location>
        <begin position="1"/>
        <end position="426"/>
    </location>
</feature>
<organismHost>
    <name type="scientific">Homo sapiens</name>
    <name type="common">Human</name>
    <dbReference type="NCBI Taxonomy" id="9606"/>
</organismHost>
<sequence length="426" mass="45643">MSKSARGWSDGFDPVYPYDADNDRPCPSSTLPSFSSDGFQEKPLGVLSLGPGRPCHTKNGEITLKLGEGVDLDDSGKLIANTVNKAIAPLSFFQQHHFPLTWIPLYTPKMENYPYKFLPPLSILKSTILNTLVSAFGSGLGLSGSALAVQLASPLTFDDKGNIKITLNRGLHVTTGDAIESNISWAKGIKFEDGAIATNIGKGSRFGTSSTETGVNNAYPIQVKLGSGLSFDSTGAIMAGNKDYDKLTLWTTPDPSPNCQILAENDAKLTLCLTMCDSQILATVSVLVVRSGNLNPITGTVSSAQVFLRFDANGVLLTEHSTSKKYWGYKQGDSIDGTPYTNAVGFMPNSTAYPKTQSSTTKNNIVGQVYMNGDVSKPMLLTITLNGTDDTTSAYSMSFSYTWTNGSYIGATFGANSYTFSYIAQQ</sequence>
<gene>
    <name type="ORF">L5</name>
</gene>
<evidence type="ECO:0000250" key="1"/>
<evidence type="ECO:0000305" key="2"/>
<dbReference type="EMBL" id="X76547">
    <property type="protein sequence ID" value="CAA54049.1"/>
    <property type="molecule type" value="Genomic_DNA"/>
</dbReference>
<dbReference type="PIR" id="S39300">
    <property type="entry name" value="S39300"/>
</dbReference>
<dbReference type="SMR" id="P36844"/>
<dbReference type="GO" id="GO:0042025">
    <property type="term" value="C:host cell nucleus"/>
    <property type="evidence" value="ECO:0007669"/>
    <property type="project" value="UniProtKB-SubCell"/>
</dbReference>
<dbReference type="GO" id="GO:0019028">
    <property type="term" value="C:viral capsid"/>
    <property type="evidence" value="ECO:0007669"/>
    <property type="project" value="UniProtKB-KW"/>
</dbReference>
<dbReference type="GO" id="GO:0098671">
    <property type="term" value="P:adhesion receptor-mediated virion attachment to host cell"/>
    <property type="evidence" value="ECO:0007669"/>
    <property type="project" value="UniProtKB-KW"/>
</dbReference>
<dbReference type="GO" id="GO:0007155">
    <property type="term" value="P:cell adhesion"/>
    <property type="evidence" value="ECO:0007669"/>
    <property type="project" value="InterPro"/>
</dbReference>
<dbReference type="GO" id="GO:0046718">
    <property type="term" value="P:symbiont entry into host cell"/>
    <property type="evidence" value="ECO:0007669"/>
    <property type="project" value="UniProtKB-KW"/>
</dbReference>
<dbReference type="Gene3D" id="2.60.90.10">
    <property type="entry name" value="Adenovirus pIV-related, attachment domain"/>
    <property type="match status" value="1"/>
</dbReference>
<dbReference type="Gene3D" id="2.10.25.20">
    <property type="entry name" value="reovirus attachment protein sigma1, domain 1"/>
    <property type="match status" value="1"/>
</dbReference>
<dbReference type="InterPro" id="IPR000931">
    <property type="entry name" value="Adeno_fibre"/>
</dbReference>
<dbReference type="InterPro" id="IPR000978">
    <property type="entry name" value="Adeno_fibre_knob"/>
</dbReference>
<dbReference type="InterPro" id="IPR000939">
    <property type="entry name" value="Adenobir_fibre_prot_rpt/shaft"/>
</dbReference>
<dbReference type="InterPro" id="IPR008982">
    <property type="entry name" value="Adenovirus_pIV-like_att"/>
</dbReference>
<dbReference type="InterPro" id="IPR009013">
    <property type="entry name" value="Attachment_protein_shaft_sf"/>
</dbReference>
<dbReference type="Pfam" id="PF00541">
    <property type="entry name" value="Adeno_knob"/>
    <property type="match status" value="1"/>
</dbReference>
<dbReference type="Pfam" id="PF00608">
    <property type="entry name" value="Adeno_shaft"/>
    <property type="match status" value="3"/>
</dbReference>
<dbReference type="PRINTS" id="PR00307">
    <property type="entry name" value="ADENOVSFIBRE"/>
</dbReference>
<dbReference type="SUPFAM" id="SSF51225">
    <property type="entry name" value="Fibre shaft of virus attachment proteins"/>
    <property type="match status" value="1"/>
</dbReference>
<dbReference type="SUPFAM" id="SSF49835">
    <property type="entry name" value="Virus attachment protein globular domain"/>
    <property type="match status" value="1"/>
</dbReference>
<accession>P36844</accession>
<keyword id="KW-0167">Capsid protein</keyword>
<keyword id="KW-1048">Host nucleus</keyword>
<keyword id="KW-0945">Host-virus interaction</keyword>
<keyword id="KW-0426">Late protein</keyword>
<keyword id="KW-1233">Viral attachment to host adhesion receptor</keyword>
<keyword id="KW-1161">Viral attachment to host cell</keyword>
<keyword id="KW-0946">Virion</keyword>
<keyword id="KW-1160">Virus entry into host cell</keyword>